<proteinExistence type="inferred from homology"/>
<feature type="chain" id="PRO_0000111734" description="Leucine-responsive regulatory protein">
    <location>
        <begin position="1"/>
        <end position="156"/>
    </location>
</feature>
<feature type="domain" description="HTH asnC-type" evidence="2">
    <location>
        <begin position="7"/>
        <end position="68"/>
    </location>
</feature>
<feature type="DNA-binding region" description="H-T-H motif" evidence="2">
    <location>
        <begin position="26"/>
        <end position="45"/>
    </location>
</feature>
<evidence type="ECO:0000250" key="1"/>
<evidence type="ECO:0000255" key="2">
    <source>
        <dbReference type="PROSITE-ProRule" id="PRU00319"/>
    </source>
</evidence>
<reference key="1">
    <citation type="journal article" date="2001" name="J. Bacteriol.">
        <title>Genetic characterization of a Sinorhizobium meliloti chromosomal region involved in lipopolysaccharide biosynthesis.</title>
        <authorList>
            <person name="Lagares A."/>
            <person name="Hozbor D.F."/>
            <person name="Niehaus K."/>
            <person name="Pich Otero A.J.L."/>
            <person name="Lorenzen J."/>
            <person name="Arnold W."/>
            <person name="Puehler A."/>
        </authorList>
    </citation>
    <scope>NUCLEOTIDE SEQUENCE [GENOMIC DNA]</scope>
    <source>
        <strain>RCR2011 / SU47</strain>
    </source>
</reference>
<reference key="2">
    <citation type="journal article" date="2001" name="Proc. Natl. Acad. Sci. U.S.A.">
        <title>Analysis of the chromosome sequence of the legume symbiont Sinorhizobium meliloti strain 1021.</title>
        <authorList>
            <person name="Capela D."/>
            <person name="Barloy-Hubler F."/>
            <person name="Gouzy J."/>
            <person name="Bothe G."/>
            <person name="Ampe F."/>
            <person name="Batut J."/>
            <person name="Boistard P."/>
            <person name="Becker A."/>
            <person name="Boutry M."/>
            <person name="Cadieu E."/>
            <person name="Dreano S."/>
            <person name="Gloux S."/>
            <person name="Godrie T."/>
            <person name="Goffeau A."/>
            <person name="Kahn D."/>
            <person name="Kiss E."/>
            <person name="Lelaure V."/>
            <person name="Masuy D."/>
            <person name="Pohl T."/>
            <person name="Portetelle D."/>
            <person name="Puehler A."/>
            <person name="Purnelle B."/>
            <person name="Ramsperger U."/>
            <person name="Renard C."/>
            <person name="Thebault P."/>
            <person name="Vandenbol M."/>
            <person name="Weidner S."/>
            <person name="Galibert F."/>
        </authorList>
    </citation>
    <scope>NUCLEOTIDE SEQUENCE [LARGE SCALE GENOMIC DNA]</scope>
    <source>
        <strain>1021</strain>
    </source>
</reference>
<reference key="3">
    <citation type="journal article" date="2001" name="Science">
        <title>The composite genome of the legume symbiont Sinorhizobium meliloti.</title>
        <authorList>
            <person name="Galibert F."/>
            <person name="Finan T.M."/>
            <person name="Long S.R."/>
            <person name="Puehler A."/>
            <person name="Abola P."/>
            <person name="Ampe F."/>
            <person name="Barloy-Hubler F."/>
            <person name="Barnett M.J."/>
            <person name="Becker A."/>
            <person name="Boistard P."/>
            <person name="Bothe G."/>
            <person name="Boutry M."/>
            <person name="Bowser L."/>
            <person name="Buhrmester J."/>
            <person name="Cadieu E."/>
            <person name="Capela D."/>
            <person name="Chain P."/>
            <person name="Cowie A."/>
            <person name="Davis R.W."/>
            <person name="Dreano S."/>
            <person name="Federspiel N.A."/>
            <person name="Fisher R.F."/>
            <person name="Gloux S."/>
            <person name="Godrie T."/>
            <person name="Goffeau A."/>
            <person name="Golding B."/>
            <person name="Gouzy J."/>
            <person name="Gurjal M."/>
            <person name="Hernandez-Lucas I."/>
            <person name="Hong A."/>
            <person name="Huizar L."/>
            <person name="Hyman R.W."/>
            <person name="Jones T."/>
            <person name="Kahn D."/>
            <person name="Kahn M.L."/>
            <person name="Kalman S."/>
            <person name="Keating D.H."/>
            <person name="Kiss E."/>
            <person name="Komp C."/>
            <person name="Lelaure V."/>
            <person name="Masuy D."/>
            <person name="Palm C."/>
            <person name="Peck M.C."/>
            <person name="Pohl T.M."/>
            <person name="Portetelle D."/>
            <person name="Purnelle B."/>
            <person name="Ramsperger U."/>
            <person name="Surzycki R."/>
            <person name="Thebault P."/>
            <person name="Vandenbol M."/>
            <person name="Vorhoelter F.J."/>
            <person name="Weidner S."/>
            <person name="Wells D.H."/>
            <person name="Wong K."/>
            <person name="Yeh K.-C."/>
            <person name="Batut J."/>
        </authorList>
    </citation>
    <scope>NUCLEOTIDE SEQUENCE [LARGE SCALE GENOMIC DNA]</scope>
    <source>
        <strain>1021</strain>
    </source>
</reference>
<name>LRP_RHIME</name>
<keyword id="KW-0010">Activator</keyword>
<keyword id="KW-0238">DNA-binding</keyword>
<keyword id="KW-1185">Reference proteome</keyword>
<keyword id="KW-0804">Transcription</keyword>
<keyword id="KW-0805">Transcription regulation</keyword>
<gene>
    <name type="primary">lrp</name>
    <name type="ordered locus">R01568</name>
    <name type="ORF">SMc01223</name>
</gene>
<dbReference type="EMBL" id="AF193023">
    <property type="protein sequence ID" value="AAF06012.1"/>
    <property type="molecule type" value="Genomic_DNA"/>
</dbReference>
<dbReference type="EMBL" id="AL591688">
    <property type="protein sequence ID" value="CAC46147.1"/>
    <property type="molecule type" value="Genomic_DNA"/>
</dbReference>
<dbReference type="RefSeq" id="NP_385674.1">
    <property type="nucleotide sequence ID" value="NC_003047.1"/>
</dbReference>
<dbReference type="RefSeq" id="WP_003529557.1">
    <property type="nucleotide sequence ID" value="NC_003047.1"/>
</dbReference>
<dbReference type="SMR" id="P56901"/>
<dbReference type="EnsemblBacteria" id="CAC46147">
    <property type="protein sequence ID" value="CAC46147"/>
    <property type="gene ID" value="SMc01223"/>
</dbReference>
<dbReference type="KEGG" id="sme:SMc01223"/>
<dbReference type="PATRIC" id="fig|266834.11.peg.2994"/>
<dbReference type="eggNOG" id="COG1522">
    <property type="taxonomic scope" value="Bacteria"/>
</dbReference>
<dbReference type="HOGENOM" id="CLU_091233_0_3_5"/>
<dbReference type="OrthoDB" id="9811243at2"/>
<dbReference type="Proteomes" id="UP000001976">
    <property type="component" value="Chromosome"/>
</dbReference>
<dbReference type="GO" id="GO:0005829">
    <property type="term" value="C:cytosol"/>
    <property type="evidence" value="ECO:0007669"/>
    <property type="project" value="TreeGrafter"/>
</dbReference>
<dbReference type="GO" id="GO:0043565">
    <property type="term" value="F:sequence-specific DNA binding"/>
    <property type="evidence" value="ECO:0007669"/>
    <property type="project" value="InterPro"/>
</dbReference>
<dbReference type="GO" id="GO:0043200">
    <property type="term" value="P:response to amino acid"/>
    <property type="evidence" value="ECO:0007669"/>
    <property type="project" value="TreeGrafter"/>
</dbReference>
<dbReference type="CDD" id="cd00090">
    <property type="entry name" value="HTH_ARSR"/>
    <property type="match status" value="1"/>
</dbReference>
<dbReference type="FunFam" id="1.10.10.10:FF:000186">
    <property type="entry name" value="AsnC family transcriptional regulator"/>
    <property type="match status" value="1"/>
</dbReference>
<dbReference type="Gene3D" id="3.30.70.920">
    <property type="match status" value="1"/>
</dbReference>
<dbReference type="Gene3D" id="1.10.10.10">
    <property type="entry name" value="Winged helix-like DNA-binding domain superfamily/Winged helix DNA-binding domain"/>
    <property type="match status" value="1"/>
</dbReference>
<dbReference type="InterPro" id="IPR011991">
    <property type="entry name" value="ArsR-like_HTH"/>
</dbReference>
<dbReference type="InterPro" id="IPR000485">
    <property type="entry name" value="AsnC-type_HTH_dom"/>
</dbReference>
<dbReference type="InterPro" id="IPR011008">
    <property type="entry name" value="Dimeric_a/b-barrel"/>
</dbReference>
<dbReference type="InterPro" id="IPR019888">
    <property type="entry name" value="Tscrpt_reg_AsnC-like"/>
</dbReference>
<dbReference type="InterPro" id="IPR019887">
    <property type="entry name" value="Tscrpt_reg_AsnC/Lrp_C"/>
</dbReference>
<dbReference type="InterPro" id="IPR019885">
    <property type="entry name" value="Tscrpt_reg_HTH_AsnC-type_CS"/>
</dbReference>
<dbReference type="InterPro" id="IPR036388">
    <property type="entry name" value="WH-like_DNA-bd_sf"/>
</dbReference>
<dbReference type="InterPro" id="IPR036390">
    <property type="entry name" value="WH_DNA-bd_sf"/>
</dbReference>
<dbReference type="PANTHER" id="PTHR30154">
    <property type="entry name" value="LEUCINE-RESPONSIVE REGULATORY PROTEIN"/>
    <property type="match status" value="1"/>
</dbReference>
<dbReference type="PANTHER" id="PTHR30154:SF34">
    <property type="entry name" value="TRANSCRIPTIONAL REGULATOR AZLB"/>
    <property type="match status" value="1"/>
</dbReference>
<dbReference type="Pfam" id="PF01037">
    <property type="entry name" value="AsnC_trans_reg"/>
    <property type="match status" value="1"/>
</dbReference>
<dbReference type="Pfam" id="PF13412">
    <property type="entry name" value="HTH_24"/>
    <property type="match status" value="1"/>
</dbReference>
<dbReference type="PRINTS" id="PR00033">
    <property type="entry name" value="HTHASNC"/>
</dbReference>
<dbReference type="SMART" id="SM00344">
    <property type="entry name" value="HTH_ASNC"/>
    <property type="match status" value="1"/>
</dbReference>
<dbReference type="SUPFAM" id="SSF54909">
    <property type="entry name" value="Dimeric alpha+beta barrel"/>
    <property type="match status" value="1"/>
</dbReference>
<dbReference type="SUPFAM" id="SSF46785">
    <property type="entry name" value="Winged helix' DNA-binding domain"/>
    <property type="match status" value="1"/>
</dbReference>
<dbReference type="PROSITE" id="PS00519">
    <property type="entry name" value="HTH_ASNC_1"/>
    <property type="match status" value="1"/>
</dbReference>
<dbReference type="PROSITE" id="PS50956">
    <property type="entry name" value="HTH_ASNC_2"/>
    <property type="match status" value="1"/>
</dbReference>
<comment type="function">
    <text evidence="1">Mediates a global response to leucine. Exogenous leucine affects the expression of a number of different operons; lrp mediates this effect for at least some of these operons (By similarity).</text>
</comment>
<comment type="subunit">
    <text evidence="1">Homodimer.</text>
</comment>
<sequence>MVVRVELDAIDMKILRELQDDGRITNVELAERVGISAPPCLRRVRKLEEAGVIRGYRALLNASALGYDLVAFCMVGLKHQSDANLKAFAARTASWPLVREAWMVSGESDFLLQCVAENLASFQDFVIEELTATENVDTVRTMLTIRQVKDACQVEI</sequence>
<organism>
    <name type="scientific">Rhizobium meliloti (strain 1021)</name>
    <name type="common">Ensifer meliloti</name>
    <name type="synonym">Sinorhizobium meliloti</name>
    <dbReference type="NCBI Taxonomy" id="266834"/>
    <lineage>
        <taxon>Bacteria</taxon>
        <taxon>Pseudomonadati</taxon>
        <taxon>Pseudomonadota</taxon>
        <taxon>Alphaproteobacteria</taxon>
        <taxon>Hyphomicrobiales</taxon>
        <taxon>Rhizobiaceae</taxon>
        <taxon>Sinorhizobium/Ensifer group</taxon>
        <taxon>Sinorhizobium</taxon>
    </lineage>
</organism>
<accession>P56901</accession>
<protein>
    <recommendedName>
        <fullName>Leucine-responsive regulatory protein</fullName>
    </recommendedName>
</protein>